<keyword id="KW-0050">Antiport</keyword>
<keyword id="KW-1003">Cell membrane</keyword>
<keyword id="KW-0375">Hydrogen ion transport</keyword>
<keyword id="KW-0406">Ion transport</keyword>
<keyword id="KW-0472">Membrane</keyword>
<keyword id="KW-0915">Sodium</keyword>
<keyword id="KW-0739">Sodium transport</keyword>
<keyword id="KW-0812">Transmembrane</keyword>
<keyword id="KW-1133">Transmembrane helix</keyword>
<keyword id="KW-0813">Transport</keyword>
<feature type="chain" id="PRO_0000217092" description="Na(+)/H(+) antiporter subunit E1">
    <location>
        <begin position="1"/>
        <end position="159"/>
    </location>
</feature>
<feature type="transmembrane region" description="Helical" evidence="2">
    <location>
        <begin position="5"/>
        <end position="22"/>
    </location>
</feature>
<feature type="transmembrane region" description="Helical" evidence="2">
    <location>
        <begin position="27"/>
        <end position="45"/>
    </location>
</feature>
<feature type="transmembrane region" description="Helical" evidence="2">
    <location>
        <begin position="52"/>
        <end position="69"/>
    </location>
</feature>
<feature type="transmembrane region" description="Helical" evidence="2">
    <location>
        <begin position="100"/>
        <end position="122"/>
    </location>
</feature>
<sequence>MAVQLVLNFIIAVFWLFVTNSYTTNNFVLGFIFGLVLVYLLHRVLPGRFYVITLYRIIKLVIIFLIELIKANFDVLKIIIKPSIKNEPGFFVYHTDLKKDWQIVLLSNLITLTPGTVVLGVSDDRTKIYIHAIDFSTKEQEVESIKTSLEKIVREVGEI</sequence>
<evidence type="ECO:0000250" key="1"/>
<evidence type="ECO:0000255" key="2"/>
<evidence type="ECO:0000305" key="3"/>
<reference key="1">
    <citation type="journal article" date="2002" name="Lancet">
        <title>Genome and virulence determinants of high virulence community-acquired MRSA.</title>
        <authorList>
            <person name="Baba T."/>
            <person name="Takeuchi F."/>
            <person name="Kuroda M."/>
            <person name="Yuzawa H."/>
            <person name="Aoki K."/>
            <person name="Oguchi A."/>
            <person name="Nagai Y."/>
            <person name="Iwama N."/>
            <person name="Asano K."/>
            <person name="Naimi T."/>
            <person name="Kuroda H."/>
            <person name="Cui L."/>
            <person name="Yamamoto K."/>
            <person name="Hiramatsu K."/>
        </authorList>
    </citation>
    <scope>NUCLEOTIDE SEQUENCE [LARGE SCALE GENOMIC DNA]</scope>
    <source>
        <strain>MW2</strain>
    </source>
</reference>
<gene>
    <name type="primary">mnhE1</name>
    <name type="ordered locus">MW0830</name>
</gene>
<proteinExistence type="inferred from homology"/>
<dbReference type="EMBL" id="BA000033">
    <property type="protein sequence ID" value="BAB94695.1"/>
    <property type="molecule type" value="Genomic_DNA"/>
</dbReference>
<dbReference type="PIR" id="E89861">
    <property type="entry name" value="E89861"/>
</dbReference>
<dbReference type="RefSeq" id="WP_000290674.1">
    <property type="nucleotide sequence ID" value="NC_003923.1"/>
</dbReference>
<dbReference type="SMR" id="P60691"/>
<dbReference type="KEGG" id="sam:MW0830"/>
<dbReference type="HOGENOM" id="CLU_086615_3_2_9"/>
<dbReference type="GO" id="GO:0005886">
    <property type="term" value="C:plasma membrane"/>
    <property type="evidence" value="ECO:0007669"/>
    <property type="project" value="UniProtKB-SubCell"/>
</dbReference>
<dbReference type="GO" id="GO:0015297">
    <property type="term" value="F:antiporter activity"/>
    <property type="evidence" value="ECO:0007669"/>
    <property type="project" value="UniProtKB-KW"/>
</dbReference>
<dbReference type="GO" id="GO:0008324">
    <property type="term" value="F:monoatomic cation transmembrane transporter activity"/>
    <property type="evidence" value="ECO:0007669"/>
    <property type="project" value="InterPro"/>
</dbReference>
<dbReference type="GO" id="GO:1902600">
    <property type="term" value="P:proton transmembrane transport"/>
    <property type="evidence" value="ECO:0007669"/>
    <property type="project" value="UniProtKB-KW"/>
</dbReference>
<dbReference type="GO" id="GO:0006814">
    <property type="term" value="P:sodium ion transport"/>
    <property type="evidence" value="ECO:0007669"/>
    <property type="project" value="UniProtKB-KW"/>
</dbReference>
<dbReference type="InterPro" id="IPR004847">
    <property type="entry name" value="Antiport_suE1"/>
</dbReference>
<dbReference type="InterPro" id="IPR002758">
    <property type="entry name" value="Cation_antiport_E"/>
</dbReference>
<dbReference type="NCBIfam" id="TIGR00942">
    <property type="entry name" value="2a6301s05"/>
    <property type="match status" value="1"/>
</dbReference>
<dbReference type="NCBIfam" id="NF009291">
    <property type="entry name" value="PRK12651.1-1"/>
    <property type="match status" value="1"/>
</dbReference>
<dbReference type="PANTHER" id="PTHR34584">
    <property type="entry name" value="NA(+)/H(+) ANTIPORTER SUBUNIT E1"/>
    <property type="match status" value="1"/>
</dbReference>
<dbReference type="PANTHER" id="PTHR34584:SF1">
    <property type="entry name" value="NA(+)_H(+) ANTIPORTER SUBUNIT E1"/>
    <property type="match status" value="1"/>
</dbReference>
<dbReference type="Pfam" id="PF01899">
    <property type="entry name" value="MNHE"/>
    <property type="match status" value="1"/>
</dbReference>
<dbReference type="PIRSF" id="PIRSF019239">
    <property type="entry name" value="MrpE"/>
    <property type="match status" value="1"/>
</dbReference>
<organism>
    <name type="scientific">Staphylococcus aureus (strain MW2)</name>
    <dbReference type="NCBI Taxonomy" id="196620"/>
    <lineage>
        <taxon>Bacteria</taxon>
        <taxon>Bacillati</taxon>
        <taxon>Bacillota</taxon>
        <taxon>Bacilli</taxon>
        <taxon>Bacillales</taxon>
        <taxon>Staphylococcaceae</taxon>
        <taxon>Staphylococcus</taxon>
    </lineage>
</organism>
<name>MNHE1_STAAW</name>
<comment type="function">
    <text evidence="1">Mnh complex is a Na(+)/H(+) antiporter involved in Na(+) excretion.</text>
</comment>
<comment type="subunit">
    <text evidence="1">May form a heterooligomeric complex that consists of seven subunits: mnhA1, mnhB1, mnhC1, mnhD1, mnhE1, mnhF1 and mnhG1.</text>
</comment>
<comment type="subcellular location">
    <subcellularLocation>
        <location evidence="3">Cell membrane</location>
        <topology evidence="3">Multi-pass membrane protein</topology>
    </subcellularLocation>
</comment>
<comment type="similarity">
    <text evidence="3">Belongs to the CPA3 antiporters (TC 2.A.63) subunit E family.</text>
</comment>
<protein>
    <recommendedName>
        <fullName>Na(+)/H(+) antiporter subunit E1</fullName>
    </recommendedName>
    <alternativeName>
        <fullName>Mnh complex subunit E1</fullName>
    </alternativeName>
</protein>
<accession>P60691</accession>
<accession>Q9ZNG2</accession>